<proteinExistence type="inferred from homology"/>
<comment type="function">
    <text evidence="1">Is able to transfer iron-sulfur clusters to apo-ferredoxin. Multiple cycles of [2Fe2S] cluster formation and transfer are observed, suggesting that IscA acts catalytically. Recruits intracellular free iron so as to provide iron for the assembly of transient iron-sulfur cluster in IscU in the presence of IscS, L-cysteine and the thioredoxin reductase system TrxA/TrxB (By similarity).</text>
</comment>
<comment type="cofactor">
    <cofactor evidence="1">
        <name>Fe cation</name>
        <dbReference type="ChEBI" id="CHEBI:24875"/>
    </cofactor>
    <text evidence="1">Binds 2 iron ions per dimer. The dimer may bind additional iron ions.</text>
</comment>
<comment type="subunit">
    <text evidence="1">Homodimer; may form tetramers and higher multimers.</text>
</comment>
<comment type="similarity">
    <text evidence="2">Belongs to the HesB/IscA family.</text>
</comment>
<keyword id="KW-0408">Iron</keyword>
<keyword id="KW-0479">Metal-binding</keyword>
<keyword id="KW-1185">Reference proteome</keyword>
<reference key="1">
    <citation type="journal article" date="2002" name="Nucleic Acids Res.">
        <title>Genome sequence of Shigella flexneri 2a: insights into pathogenicity through comparison with genomes of Escherichia coli K12 and O157.</title>
        <authorList>
            <person name="Jin Q."/>
            <person name="Yuan Z."/>
            <person name="Xu J."/>
            <person name="Wang Y."/>
            <person name="Shen Y."/>
            <person name="Lu W."/>
            <person name="Wang J."/>
            <person name="Liu H."/>
            <person name="Yang J."/>
            <person name="Yang F."/>
            <person name="Zhang X."/>
            <person name="Zhang J."/>
            <person name="Yang G."/>
            <person name="Wu H."/>
            <person name="Qu D."/>
            <person name="Dong J."/>
            <person name="Sun L."/>
            <person name="Xue Y."/>
            <person name="Zhao A."/>
            <person name="Gao Y."/>
            <person name="Zhu J."/>
            <person name="Kan B."/>
            <person name="Ding K."/>
            <person name="Chen S."/>
            <person name="Cheng H."/>
            <person name="Yao Z."/>
            <person name="He B."/>
            <person name="Chen R."/>
            <person name="Ma D."/>
            <person name="Qiang B."/>
            <person name="Wen Y."/>
            <person name="Hou Y."/>
            <person name="Yu J."/>
        </authorList>
    </citation>
    <scope>NUCLEOTIDE SEQUENCE [LARGE SCALE GENOMIC DNA]</scope>
    <source>
        <strain>301 / Serotype 2a</strain>
    </source>
</reference>
<reference key="2">
    <citation type="journal article" date="2003" name="Infect. Immun.">
        <title>Complete genome sequence and comparative genomics of Shigella flexneri serotype 2a strain 2457T.</title>
        <authorList>
            <person name="Wei J."/>
            <person name="Goldberg M.B."/>
            <person name="Burland V."/>
            <person name="Venkatesan M.M."/>
            <person name="Deng W."/>
            <person name="Fournier G."/>
            <person name="Mayhew G.F."/>
            <person name="Plunkett G. III"/>
            <person name="Rose D.J."/>
            <person name="Darling A."/>
            <person name="Mau B."/>
            <person name="Perna N.T."/>
            <person name="Payne S.M."/>
            <person name="Runyen-Janecky L.J."/>
            <person name="Zhou S."/>
            <person name="Schwartz D.C."/>
            <person name="Blattner F.R."/>
        </authorList>
    </citation>
    <scope>NUCLEOTIDE SEQUENCE [LARGE SCALE GENOMIC DNA]</scope>
    <source>
        <strain>ATCC 700930 / 2457T / Serotype 2a</strain>
    </source>
</reference>
<protein>
    <recommendedName>
        <fullName>Iron-binding protein IscA</fullName>
    </recommendedName>
    <alternativeName>
        <fullName>Iron-sulfur cluster assembly protein</fullName>
    </alternativeName>
</protein>
<evidence type="ECO:0000250" key="1"/>
<evidence type="ECO:0000305" key="2"/>
<name>ISCA_SHIFL</name>
<accession>P0AAD1</accession>
<accession>P36539</accession>
<accession>P77691</accession>
<dbReference type="EMBL" id="AE005674">
    <property type="protein sequence ID" value="AAN44074.2"/>
    <property type="molecule type" value="Genomic_DNA"/>
</dbReference>
<dbReference type="EMBL" id="AE014073">
    <property type="protein sequence ID" value="AAP17899.1"/>
    <property type="molecule type" value="Genomic_DNA"/>
</dbReference>
<dbReference type="RefSeq" id="NP_708367.2">
    <property type="nucleotide sequence ID" value="NC_004337.2"/>
</dbReference>
<dbReference type="RefSeq" id="WP_000028953.1">
    <property type="nucleotide sequence ID" value="NZ_WPGW01000021.1"/>
</dbReference>
<dbReference type="SMR" id="P0AAD1"/>
<dbReference type="STRING" id="198214.SF2575"/>
<dbReference type="PaxDb" id="198214-SF2575"/>
<dbReference type="GeneID" id="1025895"/>
<dbReference type="GeneID" id="93774608"/>
<dbReference type="KEGG" id="sfl:SF2575"/>
<dbReference type="KEGG" id="sfx:S2747"/>
<dbReference type="PATRIC" id="fig|198214.7.peg.3075"/>
<dbReference type="HOGENOM" id="CLU_069054_5_1_6"/>
<dbReference type="Proteomes" id="UP000001006">
    <property type="component" value="Chromosome"/>
</dbReference>
<dbReference type="Proteomes" id="UP000002673">
    <property type="component" value="Chromosome"/>
</dbReference>
<dbReference type="GO" id="GO:0005829">
    <property type="term" value="C:cytosol"/>
    <property type="evidence" value="ECO:0007669"/>
    <property type="project" value="TreeGrafter"/>
</dbReference>
<dbReference type="GO" id="GO:0051537">
    <property type="term" value="F:2 iron, 2 sulfur cluster binding"/>
    <property type="evidence" value="ECO:0007669"/>
    <property type="project" value="TreeGrafter"/>
</dbReference>
<dbReference type="GO" id="GO:0005506">
    <property type="term" value="F:iron ion binding"/>
    <property type="evidence" value="ECO:0007669"/>
    <property type="project" value="UniProtKB-UniRule"/>
</dbReference>
<dbReference type="GO" id="GO:0016226">
    <property type="term" value="P:iron-sulfur cluster assembly"/>
    <property type="evidence" value="ECO:0007669"/>
    <property type="project" value="UniProtKB-UniRule"/>
</dbReference>
<dbReference type="FunFam" id="2.60.300.12:FF:000001">
    <property type="entry name" value="Iron-binding protein IscA"/>
    <property type="match status" value="1"/>
</dbReference>
<dbReference type="Gene3D" id="2.60.300.12">
    <property type="entry name" value="HesB-like domain"/>
    <property type="match status" value="1"/>
</dbReference>
<dbReference type="HAMAP" id="MF_01429">
    <property type="entry name" value="Fe_S_insert_IscA"/>
    <property type="match status" value="1"/>
</dbReference>
<dbReference type="InterPro" id="IPR050322">
    <property type="entry name" value="Fe-S_cluster_asmbl/transfer"/>
</dbReference>
<dbReference type="InterPro" id="IPR000361">
    <property type="entry name" value="FeS_biogenesis"/>
</dbReference>
<dbReference type="InterPro" id="IPR016092">
    <property type="entry name" value="FeS_cluster_insertion"/>
</dbReference>
<dbReference type="InterPro" id="IPR017870">
    <property type="entry name" value="FeS_cluster_insertion_CS"/>
</dbReference>
<dbReference type="InterPro" id="IPR035903">
    <property type="entry name" value="HesB-like_dom_sf"/>
</dbReference>
<dbReference type="InterPro" id="IPR011302">
    <property type="entry name" value="IscA_proteobacteria"/>
</dbReference>
<dbReference type="NCBIfam" id="TIGR00049">
    <property type="entry name" value="iron-sulfur cluster assembly accessory protein"/>
    <property type="match status" value="1"/>
</dbReference>
<dbReference type="NCBIfam" id="TIGR02011">
    <property type="entry name" value="IscA"/>
    <property type="match status" value="1"/>
</dbReference>
<dbReference type="NCBIfam" id="NF007049">
    <property type="entry name" value="PRK09502.1"/>
    <property type="match status" value="1"/>
</dbReference>
<dbReference type="PANTHER" id="PTHR10072:SF41">
    <property type="entry name" value="IRON-SULFUR CLUSTER ASSEMBLY 1 HOMOLOG, MITOCHONDRIAL"/>
    <property type="match status" value="1"/>
</dbReference>
<dbReference type="PANTHER" id="PTHR10072">
    <property type="entry name" value="IRON-SULFUR CLUSTER ASSEMBLY PROTEIN"/>
    <property type="match status" value="1"/>
</dbReference>
<dbReference type="Pfam" id="PF01521">
    <property type="entry name" value="Fe-S_biosyn"/>
    <property type="match status" value="1"/>
</dbReference>
<dbReference type="SUPFAM" id="SSF89360">
    <property type="entry name" value="HesB-like domain"/>
    <property type="match status" value="1"/>
</dbReference>
<dbReference type="PROSITE" id="PS01152">
    <property type="entry name" value="HESB"/>
    <property type="match status" value="1"/>
</dbReference>
<sequence length="107" mass="11556">MSITLSDSAAARVNTFLANRGKGFGLRLGVRTSGCSGMAYVLEFVDEPTPEDIVFEDKGVKVVVDGKSLQFLDGTQLDFVKEGLNEGFKFTNPNVKDECGCGESFHV</sequence>
<organism>
    <name type="scientific">Shigella flexneri</name>
    <dbReference type="NCBI Taxonomy" id="623"/>
    <lineage>
        <taxon>Bacteria</taxon>
        <taxon>Pseudomonadati</taxon>
        <taxon>Pseudomonadota</taxon>
        <taxon>Gammaproteobacteria</taxon>
        <taxon>Enterobacterales</taxon>
        <taxon>Enterobacteriaceae</taxon>
        <taxon>Shigella</taxon>
    </lineage>
</organism>
<gene>
    <name type="primary">iscA</name>
    <name type="ordered locus">SF2575</name>
    <name type="ordered locus">S2747</name>
</gene>
<feature type="chain" id="PRO_0000077005" description="Iron-binding protein IscA">
    <location>
        <begin position="1"/>
        <end position="107"/>
    </location>
</feature>
<feature type="binding site" evidence="1">
    <location>
        <position position="35"/>
    </location>
    <ligand>
        <name>Fe cation</name>
        <dbReference type="ChEBI" id="CHEBI:24875"/>
    </ligand>
</feature>
<feature type="binding site" evidence="1">
    <location>
        <position position="99"/>
    </location>
    <ligand>
        <name>Fe cation</name>
        <dbReference type="ChEBI" id="CHEBI:24875"/>
    </ligand>
</feature>
<feature type="binding site" evidence="1">
    <location>
        <position position="101"/>
    </location>
    <ligand>
        <name>Fe cation</name>
        <dbReference type="ChEBI" id="CHEBI:24875"/>
    </ligand>
</feature>